<proteinExistence type="inferred from homology"/>
<comment type="function">
    <text evidence="1">Catalyzes the decarboxylation of four acetate groups of uroporphyrinogen-III to yield coproporphyrinogen-III.</text>
</comment>
<comment type="catalytic activity">
    <reaction evidence="1">
        <text>uroporphyrinogen III + 4 H(+) = coproporphyrinogen III + 4 CO2</text>
        <dbReference type="Rhea" id="RHEA:19865"/>
        <dbReference type="ChEBI" id="CHEBI:15378"/>
        <dbReference type="ChEBI" id="CHEBI:16526"/>
        <dbReference type="ChEBI" id="CHEBI:57308"/>
        <dbReference type="ChEBI" id="CHEBI:57309"/>
        <dbReference type="EC" id="4.1.1.37"/>
    </reaction>
</comment>
<comment type="pathway">
    <text evidence="1">Porphyrin-containing compound metabolism; protoporphyrin-IX biosynthesis; coproporphyrinogen-III from 5-aminolevulinate: step 4/4.</text>
</comment>
<comment type="subunit">
    <text evidence="1">Homodimer.</text>
</comment>
<comment type="subcellular location">
    <subcellularLocation>
        <location evidence="1">Cytoplasm</location>
    </subcellularLocation>
</comment>
<comment type="similarity">
    <text evidence="1">Belongs to the uroporphyrinogen decarboxylase family.</text>
</comment>
<organism>
    <name type="scientific">Acinetobacter baylyi (strain ATCC 33305 / BD413 / ADP1)</name>
    <dbReference type="NCBI Taxonomy" id="62977"/>
    <lineage>
        <taxon>Bacteria</taxon>
        <taxon>Pseudomonadati</taxon>
        <taxon>Pseudomonadota</taxon>
        <taxon>Gammaproteobacteria</taxon>
        <taxon>Moraxellales</taxon>
        <taxon>Moraxellaceae</taxon>
        <taxon>Acinetobacter</taxon>
    </lineage>
</organism>
<evidence type="ECO:0000255" key="1">
    <source>
        <dbReference type="HAMAP-Rule" id="MF_00218"/>
    </source>
</evidence>
<accession>Q6F9M1</accession>
<keyword id="KW-0963">Cytoplasm</keyword>
<keyword id="KW-0210">Decarboxylase</keyword>
<keyword id="KW-0456">Lyase</keyword>
<keyword id="KW-0627">Porphyrin biosynthesis</keyword>
<feature type="chain" id="PRO_1000023865" description="Uroporphyrinogen decarboxylase">
    <location>
        <begin position="1"/>
        <end position="358"/>
    </location>
</feature>
<feature type="binding site" evidence="1">
    <location>
        <begin position="27"/>
        <end position="31"/>
    </location>
    <ligand>
        <name>substrate</name>
    </ligand>
</feature>
<feature type="binding site" evidence="1">
    <location>
        <position position="77"/>
    </location>
    <ligand>
        <name>substrate</name>
    </ligand>
</feature>
<feature type="binding site" evidence="1">
    <location>
        <position position="154"/>
    </location>
    <ligand>
        <name>substrate</name>
    </ligand>
</feature>
<feature type="binding site" evidence="1">
    <location>
        <position position="209"/>
    </location>
    <ligand>
        <name>substrate</name>
    </ligand>
</feature>
<feature type="binding site" evidence="1">
    <location>
        <position position="330"/>
    </location>
    <ligand>
        <name>substrate</name>
    </ligand>
</feature>
<feature type="site" description="Transition state stabilizer" evidence="1">
    <location>
        <position position="77"/>
    </location>
</feature>
<protein>
    <recommendedName>
        <fullName evidence="1">Uroporphyrinogen decarboxylase</fullName>
        <shortName evidence="1">UPD</shortName>
        <shortName evidence="1">URO-D</shortName>
        <ecNumber evidence="1">4.1.1.37</ecNumber>
    </recommendedName>
</protein>
<gene>
    <name evidence="1" type="primary">hemE</name>
    <name type="ordered locus">ACIAD2474</name>
</gene>
<sequence length="358" mass="39558">MTALKNDRFLRALLREPVDTTPVWMMRQAGRYLPEYRETRAQAGDFLSLCKNTEFACEVTLQPLRRYDLDAAILFSDILTIPDALGLGLYFETGEGPKFKKTIRTEQDVLNLPNFNAKSDLDYVMNAVTTIHSALGGQVPLIGFSGSPWTLATYMVEGGSSKDFRYTKHMMYSQPEVLHALLDRLAVAVIDYLNAQIDAGAQAVQIFDSWGGALAHREYTEFSLNYMRKIVAGLQREKDGRRIPVILFTKGGGQWLEPMIATGADAIGLDWTTPLNVARKTVAGRVALQGNLDPAVLYGSAASIEKSVKAMLDDAYANGETTGYIANLGHGITQWVDPSQPKIFVDTVHEYSAKYLGS</sequence>
<reference key="1">
    <citation type="journal article" date="2004" name="Nucleic Acids Res.">
        <title>Unique features revealed by the genome sequence of Acinetobacter sp. ADP1, a versatile and naturally transformation competent bacterium.</title>
        <authorList>
            <person name="Barbe V."/>
            <person name="Vallenet D."/>
            <person name="Fonknechten N."/>
            <person name="Kreimeyer A."/>
            <person name="Oztas S."/>
            <person name="Labarre L."/>
            <person name="Cruveiller S."/>
            <person name="Robert C."/>
            <person name="Duprat S."/>
            <person name="Wincker P."/>
            <person name="Ornston L.N."/>
            <person name="Weissenbach J."/>
            <person name="Marliere P."/>
            <person name="Cohen G.N."/>
            <person name="Medigue C."/>
        </authorList>
    </citation>
    <scope>NUCLEOTIDE SEQUENCE [LARGE SCALE GENOMIC DNA]</scope>
    <source>
        <strain>ATCC 33305 / BD413 / ADP1</strain>
    </source>
</reference>
<name>DCUP_ACIAD</name>
<dbReference type="EC" id="4.1.1.37" evidence="1"/>
<dbReference type="EMBL" id="CR543861">
    <property type="protein sequence ID" value="CAG69243.1"/>
    <property type="molecule type" value="Genomic_DNA"/>
</dbReference>
<dbReference type="RefSeq" id="WP_004928475.1">
    <property type="nucleotide sequence ID" value="NC_005966.1"/>
</dbReference>
<dbReference type="SMR" id="Q6F9M1"/>
<dbReference type="STRING" id="202950.GCA_001485005_01525"/>
<dbReference type="GeneID" id="45234778"/>
<dbReference type="KEGG" id="aci:ACIAD2474"/>
<dbReference type="eggNOG" id="COG0407">
    <property type="taxonomic scope" value="Bacteria"/>
</dbReference>
<dbReference type="HOGENOM" id="CLU_040933_0_0_6"/>
<dbReference type="OrthoDB" id="9806656at2"/>
<dbReference type="BioCyc" id="ASP62977:ACIAD_RS11305-MONOMER"/>
<dbReference type="UniPathway" id="UPA00251">
    <property type="reaction ID" value="UER00321"/>
</dbReference>
<dbReference type="Proteomes" id="UP000000430">
    <property type="component" value="Chromosome"/>
</dbReference>
<dbReference type="GO" id="GO:0005829">
    <property type="term" value="C:cytosol"/>
    <property type="evidence" value="ECO:0007669"/>
    <property type="project" value="TreeGrafter"/>
</dbReference>
<dbReference type="GO" id="GO:0004853">
    <property type="term" value="F:uroporphyrinogen decarboxylase activity"/>
    <property type="evidence" value="ECO:0007669"/>
    <property type="project" value="UniProtKB-UniRule"/>
</dbReference>
<dbReference type="GO" id="GO:0019353">
    <property type="term" value="P:protoporphyrinogen IX biosynthetic process from glutamate"/>
    <property type="evidence" value="ECO:0007669"/>
    <property type="project" value="TreeGrafter"/>
</dbReference>
<dbReference type="CDD" id="cd00717">
    <property type="entry name" value="URO-D"/>
    <property type="match status" value="1"/>
</dbReference>
<dbReference type="FunFam" id="3.20.20.210:FF:000001">
    <property type="entry name" value="Uroporphyrinogen decarboxylase"/>
    <property type="match status" value="1"/>
</dbReference>
<dbReference type="Gene3D" id="3.20.20.210">
    <property type="match status" value="1"/>
</dbReference>
<dbReference type="HAMAP" id="MF_00218">
    <property type="entry name" value="URO_D"/>
    <property type="match status" value="1"/>
</dbReference>
<dbReference type="InterPro" id="IPR038071">
    <property type="entry name" value="UROD/MetE-like_sf"/>
</dbReference>
<dbReference type="InterPro" id="IPR006361">
    <property type="entry name" value="Uroporphyrinogen_deCO2ase_HemE"/>
</dbReference>
<dbReference type="InterPro" id="IPR000257">
    <property type="entry name" value="Uroporphyrinogen_deCOase"/>
</dbReference>
<dbReference type="NCBIfam" id="TIGR01464">
    <property type="entry name" value="hemE"/>
    <property type="match status" value="1"/>
</dbReference>
<dbReference type="PANTHER" id="PTHR21091">
    <property type="entry name" value="METHYLTETRAHYDROFOLATE:HOMOCYSTEINE METHYLTRANSFERASE RELATED"/>
    <property type="match status" value="1"/>
</dbReference>
<dbReference type="PANTHER" id="PTHR21091:SF169">
    <property type="entry name" value="UROPORPHYRINOGEN DECARBOXYLASE"/>
    <property type="match status" value="1"/>
</dbReference>
<dbReference type="Pfam" id="PF01208">
    <property type="entry name" value="URO-D"/>
    <property type="match status" value="1"/>
</dbReference>
<dbReference type="SUPFAM" id="SSF51726">
    <property type="entry name" value="UROD/MetE-like"/>
    <property type="match status" value="1"/>
</dbReference>
<dbReference type="PROSITE" id="PS00906">
    <property type="entry name" value="UROD_1"/>
    <property type="match status" value="1"/>
</dbReference>
<dbReference type="PROSITE" id="PS00907">
    <property type="entry name" value="UROD_2"/>
    <property type="match status" value="1"/>
</dbReference>